<organism>
    <name type="scientific">Girardia tigrina</name>
    <name type="common">Planarian</name>
    <name type="synonym">Dugesia tigrina</name>
    <dbReference type="NCBI Taxonomy" id="6162"/>
    <lineage>
        <taxon>Eukaryota</taxon>
        <taxon>Metazoa</taxon>
        <taxon>Spiralia</taxon>
        <taxon>Lophotrochozoa</taxon>
        <taxon>Platyhelminthes</taxon>
        <taxon>Rhabditophora</taxon>
        <taxon>Seriata</taxon>
        <taxon>Tricladida</taxon>
        <taxon>Continenticola</taxon>
        <taxon>Geoplanoidea</taxon>
        <taxon>Dugesiidae</taxon>
        <taxon>Girardia</taxon>
    </lineage>
</organism>
<name>DTH1_GIRTI</name>
<sequence length="533" mass="60275">MSSNGDSVKYDTNFDREGYSTDSSNECPNQIDDPLNGIPNSQNSENFQLYSRNNNANELHETFPTTIPIAQQVHLSSFRNSGMVNSNSRSIGPDGSIYSIQPFDRALLQRNFIPNDEMTSNMSFVQMLNSANYDQIEPAFYQNMPGIGNSFMMQSILNPNPNDQEIDNPISDNSTYVLVQGDSNIPTNPQSNPINPTYVSLDLNDCRSNMFEYPSQTGHQYPDINGNGPRLLHCKQELSYPQTNISPFDYRLSRSMQSNTPLSSYKLSLPEIKTISNDWIKGSQNVNFNQNQLLRSTNVSDYTLIKNLPQNLPNPNQTDSIYSSSINENNQPIRNYDSPNPDREDDSEIHENPNPHDTSSVENNDNENSSSGDIGKKRKRRVLFSKKQILELERHFRQKKYLSAPEREHLANLIGLSPTQVKIWFQNHRYKMKRAHHEKALEMGNLAVNRRLNQSMFNDSKSHLPGNFELGINNSFYNSNLALGNLSLNPAVNLMGRIPGMSSMLPTYPNGSQSYFNNINQATLTGSNSSWGV</sequence>
<gene>
    <name type="primary">DTH-1</name>
</gene>
<protein>
    <recommendedName>
        <fullName>Homeobox protein DTH-1</fullName>
    </recommendedName>
</protein>
<proteinExistence type="evidence at transcript level"/>
<keyword id="KW-0217">Developmental protein</keyword>
<keyword id="KW-0238">DNA-binding</keyword>
<keyword id="KW-0371">Homeobox</keyword>
<keyword id="KW-0539">Nucleus</keyword>
<feature type="chain" id="PRO_0000049063" description="Homeobox protein DTH-1">
    <location>
        <begin position="1"/>
        <end position="533"/>
    </location>
</feature>
<feature type="DNA-binding region" description="Homeobox" evidence="1">
    <location>
        <begin position="377"/>
        <end position="436"/>
    </location>
</feature>
<feature type="region of interest" description="Disordered" evidence="2">
    <location>
        <begin position="1"/>
        <end position="28"/>
    </location>
</feature>
<feature type="region of interest" description="Disordered" evidence="2">
    <location>
        <begin position="308"/>
        <end position="378"/>
    </location>
</feature>
<feature type="compositionally biased region" description="Basic and acidic residues" evidence="2">
    <location>
        <begin position="8"/>
        <end position="19"/>
    </location>
</feature>
<feature type="compositionally biased region" description="Low complexity" evidence="2">
    <location>
        <begin position="308"/>
        <end position="317"/>
    </location>
</feature>
<feature type="compositionally biased region" description="Polar residues" evidence="2">
    <location>
        <begin position="318"/>
        <end position="333"/>
    </location>
</feature>
<feature type="compositionally biased region" description="Low complexity" evidence="2">
    <location>
        <begin position="360"/>
        <end position="371"/>
    </location>
</feature>
<accession>Q00400</accession>
<dbReference type="EMBL" id="X69203">
    <property type="protein sequence ID" value="CAA49141.1"/>
    <property type="molecule type" value="Genomic_DNA"/>
</dbReference>
<dbReference type="EMBL" id="X69200">
    <property type="protein sequence ID" value="CAA49141.1"/>
    <property type="status" value="JOINED"/>
    <property type="molecule type" value="Genomic_DNA"/>
</dbReference>
<dbReference type="EMBL" id="X69201">
    <property type="protein sequence ID" value="CAA49141.1"/>
    <property type="status" value="JOINED"/>
    <property type="molecule type" value="Genomic_DNA"/>
</dbReference>
<dbReference type="EMBL" id="X56499">
    <property type="protein sequence ID" value="CAA39854.1"/>
    <property type="molecule type" value="mRNA"/>
</dbReference>
<dbReference type="PIR" id="S33701">
    <property type="entry name" value="S33701"/>
</dbReference>
<dbReference type="SMR" id="Q00400"/>
<dbReference type="GO" id="GO:0005634">
    <property type="term" value="C:nucleus"/>
    <property type="evidence" value="ECO:0007669"/>
    <property type="project" value="UniProtKB-SubCell"/>
</dbReference>
<dbReference type="GO" id="GO:0000981">
    <property type="term" value="F:DNA-binding transcription factor activity, RNA polymerase II-specific"/>
    <property type="evidence" value="ECO:0007669"/>
    <property type="project" value="InterPro"/>
</dbReference>
<dbReference type="GO" id="GO:0000978">
    <property type="term" value="F:RNA polymerase II cis-regulatory region sequence-specific DNA binding"/>
    <property type="evidence" value="ECO:0007669"/>
    <property type="project" value="TreeGrafter"/>
</dbReference>
<dbReference type="GO" id="GO:0030154">
    <property type="term" value="P:cell differentiation"/>
    <property type="evidence" value="ECO:0007669"/>
    <property type="project" value="TreeGrafter"/>
</dbReference>
<dbReference type="CDD" id="cd00086">
    <property type="entry name" value="homeodomain"/>
    <property type="match status" value="1"/>
</dbReference>
<dbReference type="FunFam" id="1.10.10.60:FF:000101">
    <property type="entry name" value="NK2 homeobox 8"/>
    <property type="match status" value="1"/>
</dbReference>
<dbReference type="Gene3D" id="1.10.10.60">
    <property type="entry name" value="Homeodomain-like"/>
    <property type="match status" value="1"/>
</dbReference>
<dbReference type="InterPro" id="IPR001356">
    <property type="entry name" value="HD"/>
</dbReference>
<dbReference type="InterPro" id="IPR017970">
    <property type="entry name" value="Homeobox_CS"/>
</dbReference>
<dbReference type="InterPro" id="IPR050394">
    <property type="entry name" value="Homeobox_NK-like"/>
</dbReference>
<dbReference type="InterPro" id="IPR009057">
    <property type="entry name" value="Homeodomain-like_sf"/>
</dbReference>
<dbReference type="PANTHER" id="PTHR24340">
    <property type="entry name" value="HOMEOBOX PROTEIN NKX"/>
    <property type="match status" value="1"/>
</dbReference>
<dbReference type="PANTHER" id="PTHR24340:SF82">
    <property type="entry name" value="HOMEOBOX PROTEIN VND"/>
    <property type="match status" value="1"/>
</dbReference>
<dbReference type="Pfam" id="PF00046">
    <property type="entry name" value="Homeodomain"/>
    <property type="match status" value="1"/>
</dbReference>
<dbReference type="SMART" id="SM00389">
    <property type="entry name" value="HOX"/>
    <property type="match status" value="1"/>
</dbReference>
<dbReference type="SUPFAM" id="SSF46689">
    <property type="entry name" value="Homeodomain-like"/>
    <property type="match status" value="1"/>
</dbReference>
<dbReference type="PROSITE" id="PS00027">
    <property type="entry name" value="HOMEOBOX_1"/>
    <property type="match status" value="1"/>
</dbReference>
<dbReference type="PROSITE" id="PS50071">
    <property type="entry name" value="HOMEOBOX_2"/>
    <property type="match status" value="1"/>
</dbReference>
<reference key="1">
    <citation type="journal article" date="1993" name="Development">
        <title>Genomic organization and expression of the planarian homeobox genes Dth-1 and Dth-2.</title>
        <authorList>
            <person name="Garcia-Fernandez J."/>
            <person name="Baguna J."/>
            <person name="Salo E."/>
        </authorList>
    </citation>
    <scope>NUCLEOTIDE SEQUENCE [GENOMIC DNA]</scope>
</reference>
<reference key="2">
    <citation type="journal article" date="1991" name="Proc. Natl. Acad. Sci. U.S.A.">
        <title>Planarian homeobox genes: cloning, sequence analysis, and expression.</title>
        <authorList>
            <person name="Salo E."/>
            <person name="Garcia-Fernandez J."/>
            <person name="Baguna J."/>
        </authorList>
    </citation>
    <scope>NUCLEOTIDE SEQUENCE [MRNA] OF 83-533</scope>
</reference>
<comment type="function">
    <text>This protein might be involved in determination and/or differentiation of nerve cells in the continuous replacement of neurons in the cephalic region.</text>
</comment>
<comment type="subcellular location">
    <subcellularLocation>
        <location evidence="3">Nucleus</location>
    </subcellularLocation>
</comment>
<comment type="tissue specificity">
    <text>Intestine and unidentified peripheral parenchymal cells. Slightly higher levels in the cephalic region compared to other body regions.</text>
</comment>
<comment type="similarity">
    <text evidence="3">Belongs to the NK-2 homeobox family.</text>
</comment>
<evidence type="ECO:0000255" key="1">
    <source>
        <dbReference type="PROSITE-ProRule" id="PRU00108"/>
    </source>
</evidence>
<evidence type="ECO:0000256" key="2">
    <source>
        <dbReference type="SAM" id="MobiDB-lite"/>
    </source>
</evidence>
<evidence type="ECO:0000305" key="3"/>